<keyword id="KW-0012">Acyltransferase</keyword>
<keyword id="KW-0963">Cytoplasm</keyword>
<keyword id="KW-0441">Lipid A biosynthesis</keyword>
<keyword id="KW-0444">Lipid biosynthesis</keyword>
<keyword id="KW-0443">Lipid metabolism</keyword>
<keyword id="KW-0677">Repeat</keyword>
<keyword id="KW-0808">Transferase</keyword>
<name>LPXA_SALDC</name>
<gene>
    <name evidence="1" type="primary">lpxA</name>
    <name type="ordered locus">SeD_A0250</name>
</gene>
<dbReference type="EC" id="2.3.1.129" evidence="1"/>
<dbReference type="EMBL" id="CP001144">
    <property type="protein sequence ID" value="ACH76384.1"/>
    <property type="molecule type" value="Genomic_DNA"/>
</dbReference>
<dbReference type="RefSeq" id="WP_000565948.1">
    <property type="nucleotide sequence ID" value="NC_011205.1"/>
</dbReference>
<dbReference type="SMR" id="B5FJ28"/>
<dbReference type="KEGG" id="sed:SeD_A0250"/>
<dbReference type="HOGENOM" id="CLU_061249_0_0_6"/>
<dbReference type="UniPathway" id="UPA00359">
    <property type="reaction ID" value="UER00477"/>
</dbReference>
<dbReference type="Proteomes" id="UP000008322">
    <property type="component" value="Chromosome"/>
</dbReference>
<dbReference type="GO" id="GO:0005737">
    <property type="term" value="C:cytoplasm"/>
    <property type="evidence" value="ECO:0007669"/>
    <property type="project" value="UniProtKB-SubCell"/>
</dbReference>
<dbReference type="GO" id="GO:0016020">
    <property type="term" value="C:membrane"/>
    <property type="evidence" value="ECO:0007669"/>
    <property type="project" value="GOC"/>
</dbReference>
<dbReference type="GO" id="GO:0008780">
    <property type="term" value="F:acyl-[acyl-carrier-protein]-UDP-N-acetylglucosamine O-acyltransferase activity"/>
    <property type="evidence" value="ECO:0007669"/>
    <property type="project" value="UniProtKB-UniRule"/>
</dbReference>
<dbReference type="GO" id="GO:0009245">
    <property type="term" value="P:lipid A biosynthetic process"/>
    <property type="evidence" value="ECO:0007669"/>
    <property type="project" value="UniProtKB-UniRule"/>
</dbReference>
<dbReference type="CDD" id="cd03351">
    <property type="entry name" value="LbH_UDP-GlcNAc_AT"/>
    <property type="match status" value="1"/>
</dbReference>
<dbReference type="FunFam" id="2.160.10.10:FF:000003">
    <property type="entry name" value="Acyl-[acyl-carrier-protein]--UDP-N-acetylglucosamine O-acyltransferase"/>
    <property type="match status" value="1"/>
</dbReference>
<dbReference type="Gene3D" id="2.160.10.10">
    <property type="entry name" value="Hexapeptide repeat proteins"/>
    <property type="match status" value="1"/>
</dbReference>
<dbReference type="Gene3D" id="1.20.1180.10">
    <property type="entry name" value="Udp N-acetylglucosamine O-acyltransferase, C-terminal domain"/>
    <property type="match status" value="1"/>
</dbReference>
<dbReference type="HAMAP" id="MF_00387">
    <property type="entry name" value="LpxA"/>
    <property type="match status" value="1"/>
</dbReference>
<dbReference type="InterPro" id="IPR029098">
    <property type="entry name" value="Acetyltransf_C"/>
</dbReference>
<dbReference type="InterPro" id="IPR037157">
    <property type="entry name" value="Acetyltransf_C_sf"/>
</dbReference>
<dbReference type="InterPro" id="IPR001451">
    <property type="entry name" value="Hexapep"/>
</dbReference>
<dbReference type="InterPro" id="IPR018357">
    <property type="entry name" value="Hexapep_transf_CS"/>
</dbReference>
<dbReference type="InterPro" id="IPR010137">
    <property type="entry name" value="Lipid_A_LpxA"/>
</dbReference>
<dbReference type="InterPro" id="IPR011004">
    <property type="entry name" value="Trimer_LpxA-like_sf"/>
</dbReference>
<dbReference type="NCBIfam" id="TIGR01852">
    <property type="entry name" value="lipid_A_lpxA"/>
    <property type="match status" value="1"/>
</dbReference>
<dbReference type="NCBIfam" id="NF003657">
    <property type="entry name" value="PRK05289.1"/>
    <property type="match status" value="1"/>
</dbReference>
<dbReference type="PANTHER" id="PTHR43480">
    <property type="entry name" value="ACYL-[ACYL-CARRIER-PROTEIN]--UDP-N-ACETYLGLUCOSAMINE O-ACYLTRANSFERASE"/>
    <property type="match status" value="1"/>
</dbReference>
<dbReference type="PANTHER" id="PTHR43480:SF1">
    <property type="entry name" value="ACYL-[ACYL-CARRIER-PROTEIN]--UDP-N-ACETYLGLUCOSAMINE O-ACYLTRANSFERASE, MITOCHONDRIAL-RELATED"/>
    <property type="match status" value="1"/>
</dbReference>
<dbReference type="Pfam" id="PF13720">
    <property type="entry name" value="Acetyltransf_11"/>
    <property type="match status" value="1"/>
</dbReference>
<dbReference type="Pfam" id="PF00132">
    <property type="entry name" value="Hexapep"/>
    <property type="match status" value="2"/>
</dbReference>
<dbReference type="PIRSF" id="PIRSF000456">
    <property type="entry name" value="UDP-GlcNAc_acltr"/>
    <property type="match status" value="1"/>
</dbReference>
<dbReference type="SUPFAM" id="SSF51161">
    <property type="entry name" value="Trimeric LpxA-like enzymes"/>
    <property type="match status" value="1"/>
</dbReference>
<dbReference type="PROSITE" id="PS00101">
    <property type="entry name" value="HEXAPEP_TRANSFERASES"/>
    <property type="match status" value="2"/>
</dbReference>
<evidence type="ECO:0000255" key="1">
    <source>
        <dbReference type="HAMAP-Rule" id="MF_00387"/>
    </source>
</evidence>
<protein>
    <recommendedName>
        <fullName evidence="1">Acyl-[acyl-carrier-protein]--UDP-N-acetylglucosamine O-acyltransferase</fullName>
        <shortName evidence="1">UDP-N-acetylglucosamine acyltransferase</shortName>
        <ecNumber evidence="1">2.3.1.129</ecNumber>
    </recommendedName>
</protein>
<organism>
    <name type="scientific">Salmonella dublin (strain CT_02021853)</name>
    <dbReference type="NCBI Taxonomy" id="439851"/>
    <lineage>
        <taxon>Bacteria</taxon>
        <taxon>Pseudomonadati</taxon>
        <taxon>Pseudomonadota</taxon>
        <taxon>Gammaproteobacteria</taxon>
        <taxon>Enterobacterales</taxon>
        <taxon>Enterobacteriaceae</taxon>
        <taxon>Salmonella</taxon>
    </lineage>
</organism>
<sequence>MIDKSAFIHPTAIVEDGAVIGANAHIGPFCIVGPQVEIGEGTVLKSHVAVNGQTKIGRDNEIYQFASIGEVNQDLKYAGEPTRVEIGDRNRIRESVTIHRGTVQGGGLTKVGSDNLLMINAHVAHDCTVGNRCILANNATLAGHVSVDDFAIIGGMTAVHQFCIIGAHVMVGGCSGVAQDVPPYVIAQGNHATPFGVNIEGLKRRGFSREGLVAIRNAYKLLYRSGKTLDEAKLEIAELAEKHPEVKAFTEFFERSTRGPIR</sequence>
<comment type="function">
    <text evidence="1">Involved in the biosynthesis of lipid A, a phosphorylated glycolipid that anchors the lipopolysaccharide to the outer membrane of the cell.</text>
</comment>
<comment type="catalytic activity">
    <reaction evidence="1">
        <text>a (3R)-hydroxyacyl-[ACP] + UDP-N-acetyl-alpha-D-glucosamine = a UDP-3-O-[(3R)-3-hydroxyacyl]-N-acetyl-alpha-D-glucosamine + holo-[ACP]</text>
        <dbReference type="Rhea" id="RHEA:67812"/>
        <dbReference type="Rhea" id="RHEA-COMP:9685"/>
        <dbReference type="Rhea" id="RHEA-COMP:9945"/>
        <dbReference type="ChEBI" id="CHEBI:57705"/>
        <dbReference type="ChEBI" id="CHEBI:64479"/>
        <dbReference type="ChEBI" id="CHEBI:78827"/>
        <dbReference type="ChEBI" id="CHEBI:173225"/>
        <dbReference type="EC" id="2.3.1.129"/>
    </reaction>
</comment>
<comment type="pathway">
    <text evidence="1">Glycolipid biosynthesis; lipid IV(A) biosynthesis; lipid IV(A) from (3R)-3-hydroxytetradecanoyl-[acyl-carrier-protein] and UDP-N-acetyl-alpha-D-glucosamine: step 1/6.</text>
</comment>
<comment type="subunit">
    <text evidence="1">Homotrimer.</text>
</comment>
<comment type="subcellular location">
    <subcellularLocation>
        <location evidence="1">Cytoplasm</location>
    </subcellularLocation>
</comment>
<comment type="similarity">
    <text evidence="1">Belongs to the transferase hexapeptide repeat family. LpxA subfamily.</text>
</comment>
<feature type="chain" id="PRO_1000122726" description="Acyl-[acyl-carrier-protein]--UDP-N-acetylglucosamine O-acyltransferase">
    <location>
        <begin position="1"/>
        <end position="262"/>
    </location>
</feature>
<accession>B5FJ28</accession>
<proteinExistence type="inferred from homology"/>
<reference key="1">
    <citation type="journal article" date="2011" name="J. Bacteriol.">
        <title>Comparative genomics of 28 Salmonella enterica isolates: evidence for CRISPR-mediated adaptive sublineage evolution.</title>
        <authorList>
            <person name="Fricke W.F."/>
            <person name="Mammel M.K."/>
            <person name="McDermott P.F."/>
            <person name="Tartera C."/>
            <person name="White D.G."/>
            <person name="Leclerc J.E."/>
            <person name="Ravel J."/>
            <person name="Cebula T.A."/>
        </authorList>
    </citation>
    <scope>NUCLEOTIDE SEQUENCE [LARGE SCALE GENOMIC DNA]</scope>
    <source>
        <strain>CT_02021853</strain>
    </source>
</reference>